<feature type="chain" id="PRO_0000206679" description="PKHD-type hydroxylase NE2125">
    <location>
        <begin position="1"/>
        <end position="227"/>
    </location>
</feature>
<feature type="domain" description="Fe2OG dioxygenase" evidence="1">
    <location>
        <begin position="78"/>
        <end position="179"/>
    </location>
</feature>
<feature type="binding site" evidence="1">
    <location>
        <position position="97"/>
    </location>
    <ligand>
        <name>Fe cation</name>
        <dbReference type="ChEBI" id="CHEBI:24875"/>
    </ligand>
</feature>
<feature type="binding site" evidence="1">
    <location>
        <position position="99"/>
    </location>
    <ligand>
        <name>Fe cation</name>
        <dbReference type="ChEBI" id="CHEBI:24875"/>
    </ligand>
</feature>
<feature type="binding site" evidence="1">
    <location>
        <position position="160"/>
    </location>
    <ligand>
        <name>Fe cation</name>
        <dbReference type="ChEBI" id="CHEBI:24875"/>
    </ligand>
</feature>
<feature type="binding site" evidence="1">
    <location>
        <position position="170"/>
    </location>
    <ligand>
        <name>2-oxoglutarate</name>
        <dbReference type="ChEBI" id="CHEBI:16810"/>
    </ligand>
</feature>
<evidence type="ECO:0000255" key="1">
    <source>
        <dbReference type="HAMAP-Rule" id="MF_00657"/>
    </source>
</evidence>
<gene>
    <name type="ordered locus">NE2125</name>
</gene>
<sequence>MLLTIDDVLTQEELAIARSMLARSAWVSGLVTAGTQAAQVKNNQQVQENDPQIVNLRRLVLGALNRNALFFTATLPEKIVPPFFNRYSGETNHYGFHVDNAMRLLPDGSGYVRTDVSATLFLSDPQEYDGGELVINDTFGQHGVKLQAGSMVIYPSSSIHQVTPVTRGERLACFMFIQSMVRNPDQRRLLYEMDMALLQLRQNIGETPAVVSLTGTYHNLLRQWADS</sequence>
<protein>
    <recommendedName>
        <fullName evidence="1">PKHD-type hydroxylase NE2125</fullName>
        <ecNumber evidence="1">1.14.11.-</ecNumber>
    </recommendedName>
</protein>
<keyword id="KW-0223">Dioxygenase</keyword>
<keyword id="KW-0408">Iron</keyword>
<keyword id="KW-0479">Metal-binding</keyword>
<keyword id="KW-0560">Oxidoreductase</keyword>
<keyword id="KW-1185">Reference proteome</keyword>
<keyword id="KW-0847">Vitamin C</keyword>
<comment type="cofactor">
    <cofactor evidence="1">
        <name>Fe(2+)</name>
        <dbReference type="ChEBI" id="CHEBI:29033"/>
    </cofactor>
    <text evidence="1">Binds 1 Fe(2+) ion per subunit.</text>
</comment>
<comment type="cofactor">
    <cofactor evidence="1">
        <name>L-ascorbate</name>
        <dbReference type="ChEBI" id="CHEBI:38290"/>
    </cofactor>
</comment>
<dbReference type="EC" id="1.14.11.-" evidence="1"/>
<dbReference type="EMBL" id="AL954747">
    <property type="protein sequence ID" value="CAD86036.1"/>
    <property type="molecule type" value="Genomic_DNA"/>
</dbReference>
<dbReference type="RefSeq" id="WP_011112627.1">
    <property type="nucleotide sequence ID" value="NC_004757.1"/>
</dbReference>
<dbReference type="SMR" id="P59727"/>
<dbReference type="STRING" id="228410.NE2125"/>
<dbReference type="DNASU" id="1083086"/>
<dbReference type="GeneID" id="87105262"/>
<dbReference type="KEGG" id="neu:NE2125"/>
<dbReference type="eggNOG" id="COG3128">
    <property type="taxonomic scope" value="Bacteria"/>
</dbReference>
<dbReference type="HOGENOM" id="CLU_106663_0_0_4"/>
<dbReference type="OrthoDB" id="9812472at2"/>
<dbReference type="PhylomeDB" id="P59727"/>
<dbReference type="Proteomes" id="UP000001416">
    <property type="component" value="Chromosome"/>
</dbReference>
<dbReference type="GO" id="GO:0016706">
    <property type="term" value="F:2-oxoglutarate-dependent dioxygenase activity"/>
    <property type="evidence" value="ECO:0007669"/>
    <property type="project" value="UniProtKB-UniRule"/>
</dbReference>
<dbReference type="GO" id="GO:0005506">
    <property type="term" value="F:iron ion binding"/>
    <property type="evidence" value="ECO:0007669"/>
    <property type="project" value="UniProtKB-UniRule"/>
</dbReference>
<dbReference type="GO" id="GO:0031418">
    <property type="term" value="F:L-ascorbic acid binding"/>
    <property type="evidence" value="ECO:0007669"/>
    <property type="project" value="UniProtKB-KW"/>
</dbReference>
<dbReference type="GO" id="GO:0006974">
    <property type="term" value="P:DNA damage response"/>
    <property type="evidence" value="ECO:0007669"/>
    <property type="project" value="TreeGrafter"/>
</dbReference>
<dbReference type="GO" id="GO:0006879">
    <property type="term" value="P:intracellular iron ion homeostasis"/>
    <property type="evidence" value="ECO:0007669"/>
    <property type="project" value="TreeGrafter"/>
</dbReference>
<dbReference type="Gene3D" id="2.60.120.620">
    <property type="entry name" value="q2cbj1_9rhob like domain"/>
    <property type="match status" value="1"/>
</dbReference>
<dbReference type="Gene3D" id="4.10.860.20">
    <property type="entry name" value="Rabenosyn, Rab binding domain"/>
    <property type="match status" value="1"/>
</dbReference>
<dbReference type="HAMAP" id="MF_00657">
    <property type="entry name" value="Hydroxyl_YbiX"/>
    <property type="match status" value="1"/>
</dbReference>
<dbReference type="InterPro" id="IPR005123">
    <property type="entry name" value="Oxoglu/Fe-dep_dioxygenase_dom"/>
</dbReference>
<dbReference type="InterPro" id="IPR041097">
    <property type="entry name" value="PKHD_C"/>
</dbReference>
<dbReference type="InterPro" id="IPR023550">
    <property type="entry name" value="PKHD_hydroxylase"/>
</dbReference>
<dbReference type="InterPro" id="IPR006620">
    <property type="entry name" value="Pro_4_hyd_alph"/>
</dbReference>
<dbReference type="InterPro" id="IPR044862">
    <property type="entry name" value="Pro_4_hyd_alph_FE2OG_OXY"/>
</dbReference>
<dbReference type="NCBIfam" id="NF003974">
    <property type="entry name" value="PRK05467.1-3"/>
    <property type="match status" value="1"/>
</dbReference>
<dbReference type="NCBIfam" id="NF003975">
    <property type="entry name" value="PRK05467.1-4"/>
    <property type="match status" value="1"/>
</dbReference>
<dbReference type="PANTHER" id="PTHR41536">
    <property type="entry name" value="PKHD-TYPE HYDROXYLASE YBIX"/>
    <property type="match status" value="1"/>
</dbReference>
<dbReference type="PANTHER" id="PTHR41536:SF1">
    <property type="entry name" value="PKHD-TYPE HYDROXYLASE YBIX"/>
    <property type="match status" value="1"/>
</dbReference>
<dbReference type="Pfam" id="PF13640">
    <property type="entry name" value="2OG-FeII_Oxy_3"/>
    <property type="match status" value="1"/>
</dbReference>
<dbReference type="Pfam" id="PF18331">
    <property type="entry name" value="PKHD_C"/>
    <property type="match status" value="1"/>
</dbReference>
<dbReference type="SMART" id="SM00702">
    <property type="entry name" value="P4Hc"/>
    <property type="match status" value="1"/>
</dbReference>
<dbReference type="PROSITE" id="PS51471">
    <property type="entry name" value="FE2OG_OXY"/>
    <property type="match status" value="1"/>
</dbReference>
<accession>P59727</accession>
<proteinExistence type="inferred from homology"/>
<name>Y2125_NITEU</name>
<organism>
    <name type="scientific">Nitrosomonas europaea (strain ATCC 19718 / CIP 103999 / KCTC 2705 / NBRC 14298)</name>
    <dbReference type="NCBI Taxonomy" id="228410"/>
    <lineage>
        <taxon>Bacteria</taxon>
        <taxon>Pseudomonadati</taxon>
        <taxon>Pseudomonadota</taxon>
        <taxon>Betaproteobacteria</taxon>
        <taxon>Nitrosomonadales</taxon>
        <taxon>Nitrosomonadaceae</taxon>
        <taxon>Nitrosomonas</taxon>
    </lineage>
</organism>
<reference key="1">
    <citation type="journal article" date="2003" name="J. Bacteriol.">
        <title>Complete genome sequence of the ammonia-oxidizing bacterium and obligate chemolithoautotroph Nitrosomonas europaea.</title>
        <authorList>
            <person name="Chain P."/>
            <person name="Lamerdin J.E."/>
            <person name="Larimer F.W."/>
            <person name="Regala W."/>
            <person name="Lao V."/>
            <person name="Land M.L."/>
            <person name="Hauser L."/>
            <person name="Hooper A.B."/>
            <person name="Klotz M.G."/>
            <person name="Norton J."/>
            <person name="Sayavedra-Soto L.A."/>
            <person name="Arciero D.M."/>
            <person name="Hommes N.G."/>
            <person name="Whittaker M.M."/>
            <person name="Arp D.J."/>
        </authorList>
    </citation>
    <scope>NUCLEOTIDE SEQUENCE [LARGE SCALE GENOMIC DNA]</scope>
    <source>
        <strain>ATCC 19718 / CIP 103999 / KCTC 2705 / NBRC 14298</strain>
    </source>
</reference>